<evidence type="ECO:0000250" key="1">
    <source>
        <dbReference type="UniProtKB" id="P27929"/>
    </source>
</evidence>
<evidence type="ECO:0000255" key="2">
    <source>
        <dbReference type="PROSITE-ProRule" id="PRU00182"/>
    </source>
</evidence>
<evidence type="ECO:0000256" key="3">
    <source>
        <dbReference type="SAM" id="MobiDB-lite"/>
    </source>
</evidence>
<evidence type="ECO:0000269" key="4">
    <source>
    </source>
</evidence>
<evidence type="ECO:0000305" key="5"/>
<accession>O60063</accession>
<accession>P78902</accession>
<comment type="function">
    <text evidence="1">Component of the mitochondrial ribosome (mitoribosome), a dedicated translation machinery responsible for the synthesis of mitochondrial genome-encoded proteins, including at least some of the essential transmembrane subunits of the mitochondrial respiratory chain. The mitoribosomes are attached to the mitochondrial inner membrane and translation products are cotranslationally integrated into the membrane.</text>
</comment>
<comment type="subunit">
    <text evidence="1">Component of the mitochondrial small ribosomal subunit (mt-SSU). Mature yeast 74S mitochondrial ribosomes consist of a small (37S) and a large (54S) subunit. The 37S small subunit contains a 15S ribosomal RNA (15S mt-rRNA) and at least 32 different proteins. The 54S large subunit contains a 21S rRNA (21S mt-rRNA) and at least 45 different proteins. uS3m, uS4m and uS5m form the narrow entry site of the mRNA channel.</text>
</comment>
<comment type="subcellular location">
    <subcellularLocation>
        <location evidence="4">Mitochondrion</location>
    </subcellularLocation>
</comment>
<comment type="similarity">
    <text evidence="5">Belongs to the universal ribosomal protein uS4 family.</text>
</comment>
<proteinExistence type="evidence at transcript level"/>
<protein>
    <recommendedName>
        <fullName evidence="5">Small ribosomal subunit protein uS4m</fullName>
    </recommendedName>
    <alternativeName>
        <fullName>37S ribosomal protein S4-like, mitochondrial</fullName>
    </alternativeName>
</protein>
<gene>
    <name type="primary">nam9</name>
    <name type="ORF">SPBC13G1.01c</name>
</gene>
<organism>
    <name type="scientific">Schizosaccharomyces pombe (strain 972 / ATCC 24843)</name>
    <name type="common">Fission yeast</name>
    <dbReference type="NCBI Taxonomy" id="284812"/>
    <lineage>
        <taxon>Eukaryota</taxon>
        <taxon>Fungi</taxon>
        <taxon>Dikarya</taxon>
        <taxon>Ascomycota</taxon>
        <taxon>Taphrinomycotina</taxon>
        <taxon>Schizosaccharomycetes</taxon>
        <taxon>Schizosaccharomycetales</taxon>
        <taxon>Schizosaccharomycetaceae</taxon>
        <taxon>Schizosaccharomyces</taxon>
    </lineage>
</organism>
<reference key="1">
    <citation type="journal article" date="1997" name="DNA Res.">
        <title>Identification of open reading frames in Schizosaccharomyces pombe cDNAs.</title>
        <authorList>
            <person name="Yoshioka S."/>
            <person name="Kato K."/>
            <person name="Nakai K."/>
            <person name="Okayama H."/>
            <person name="Nojima H."/>
        </authorList>
    </citation>
    <scope>NUCLEOTIDE SEQUENCE [LARGE SCALE MRNA]</scope>
    <source>
        <strain>PR745</strain>
    </source>
</reference>
<reference key="2">
    <citation type="journal article" date="2002" name="Nature">
        <title>The genome sequence of Schizosaccharomyces pombe.</title>
        <authorList>
            <person name="Wood V."/>
            <person name="Gwilliam R."/>
            <person name="Rajandream M.A."/>
            <person name="Lyne M.H."/>
            <person name="Lyne R."/>
            <person name="Stewart A."/>
            <person name="Sgouros J.G."/>
            <person name="Peat N."/>
            <person name="Hayles J."/>
            <person name="Baker S.G."/>
            <person name="Basham D."/>
            <person name="Bowman S."/>
            <person name="Brooks K."/>
            <person name="Brown D."/>
            <person name="Brown S."/>
            <person name="Chillingworth T."/>
            <person name="Churcher C.M."/>
            <person name="Collins M."/>
            <person name="Connor R."/>
            <person name="Cronin A."/>
            <person name="Davis P."/>
            <person name="Feltwell T."/>
            <person name="Fraser A."/>
            <person name="Gentles S."/>
            <person name="Goble A."/>
            <person name="Hamlin N."/>
            <person name="Harris D.E."/>
            <person name="Hidalgo J."/>
            <person name="Hodgson G."/>
            <person name="Holroyd S."/>
            <person name="Hornsby T."/>
            <person name="Howarth S."/>
            <person name="Huckle E.J."/>
            <person name="Hunt S."/>
            <person name="Jagels K."/>
            <person name="James K.D."/>
            <person name="Jones L."/>
            <person name="Jones M."/>
            <person name="Leather S."/>
            <person name="McDonald S."/>
            <person name="McLean J."/>
            <person name="Mooney P."/>
            <person name="Moule S."/>
            <person name="Mungall K.L."/>
            <person name="Murphy L.D."/>
            <person name="Niblett D."/>
            <person name="Odell C."/>
            <person name="Oliver K."/>
            <person name="O'Neil S."/>
            <person name="Pearson D."/>
            <person name="Quail M.A."/>
            <person name="Rabbinowitsch E."/>
            <person name="Rutherford K.M."/>
            <person name="Rutter S."/>
            <person name="Saunders D."/>
            <person name="Seeger K."/>
            <person name="Sharp S."/>
            <person name="Skelton J."/>
            <person name="Simmonds M.N."/>
            <person name="Squares R."/>
            <person name="Squares S."/>
            <person name="Stevens K."/>
            <person name="Taylor K."/>
            <person name="Taylor R.G."/>
            <person name="Tivey A."/>
            <person name="Walsh S.V."/>
            <person name="Warren T."/>
            <person name="Whitehead S."/>
            <person name="Woodward J.R."/>
            <person name="Volckaert G."/>
            <person name="Aert R."/>
            <person name="Robben J."/>
            <person name="Grymonprez B."/>
            <person name="Weltjens I."/>
            <person name="Vanstreels E."/>
            <person name="Rieger M."/>
            <person name="Schaefer M."/>
            <person name="Mueller-Auer S."/>
            <person name="Gabel C."/>
            <person name="Fuchs M."/>
            <person name="Duesterhoeft A."/>
            <person name="Fritzc C."/>
            <person name="Holzer E."/>
            <person name="Moestl D."/>
            <person name="Hilbert H."/>
            <person name="Borzym K."/>
            <person name="Langer I."/>
            <person name="Beck A."/>
            <person name="Lehrach H."/>
            <person name="Reinhardt R."/>
            <person name="Pohl T.M."/>
            <person name="Eger P."/>
            <person name="Zimmermann W."/>
            <person name="Wedler H."/>
            <person name="Wambutt R."/>
            <person name="Purnelle B."/>
            <person name="Goffeau A."/>
            <person name="Cadieu E."/>
            <person name="Dreano S."/>
            <person name="Gloux S."/>
            <person name="Lelaure V."/>
            <person name="Mottier S."/>
            <person name="Galibert F."/>
            <person name="Aves S.J."/>
            <person name="Xiang Z."/>
            <person name="Hunt C."/>
            <person name="Moore K."/>
            <person name="Hurst S.M."/>
            <person name="Lucas M."/>
            <person name="Rochet M."/>
            <person name="Gaillardin C."/>
            <person name="Tallada V.A."/>
            <person name="Garzon A."/>
            <person name="Thode G."/>
            <person name="Daga R.R."/>
            <person name="Cruzado L."/>
            <person name="Jimenez J."/>
            <person name="Sanchez M."/>
            <person name="del Rey F."/>
            <person name="Benito J."/>
            <person name="Dominguez A."/>
            <person name="Revuelta J.L."/>
            <person name="Moreno S."/>
            <person name="Armstrong J."/>
            <person name="Forsburg S.L."/>
            <person name="Cerutti L."/>
            <person name="Lowe T."/>
            <person name="McCombie W.R."/>
            <person name="Paulsen I."/>
            <person name="Potashkin J."/>
            <person name="Shpakovski G.V."/>
            <person name="Ussery D."/>
            <person name="Barrell B.G."/>
            <person name="Nurse P."/>
        </authorList>
    </citation>
    <scope>NUCLEOTIDE SEQUENCE [LARGE SCALE GENOMIC DNA]</scope>
    <source>
        <strain>972 / ATCC 24843</strain>
    </source>
</reference>
<reference key="3">
    <citation type="journal article" date="2006" name="Nat. Biotechnol.">
        <title>ORFeome cloning and global analysis of protein localization in the fission yeast Schizosaccharomyces pombe.</title>
        <authorList>
            <person name="Matsuyama A."/>
            <person name="Arai R."/>
            <person name="Yashiroda Y."/>
            <person name="Shirai A."/>
            <person name="Kamata A."/>
            <person name="Sekido S."/>
            <person name="Kobayashi Y."/>
            <person name="Hashimoto A."/>
            <person name="Hamamoto M."/>
            <person name="Hiraoka Y."/>
            <person name="Horinouchi S."/>
            <person name="Yoshida M."/>
        </authorList>
    </citation>
    <scope>SUBCELLULAR LOCATION [LARGE SCALE ANALYSIS]</scope>
</reference>
<keyword id="KW-0496">Mitochondrion</keyword>
<keyword id="KW-1185">Reference proteome</keyword>
<keyword id="KW-0687">Ribonucleoprotein</keyword>
<keyword id="KW-0689">Ribosomal protein</keyword>
<keyword id="KW-0694">RNA-binding</keyword>
<keyword id="KW-0699">rRNA-binding</keyword>
<feature type="chain" id="PRO_0000132707" description="Small ribosomal subunit protein uS4m">
    <location>
        <begin position="1"/>
        <end position="327"/>
    </location>
</feature>
<feature type="domain" description="S4 RNA-binding" evidence="2">
    <location>
        <begin position="96"/>
        <end position="154"/>
    </location>
</feature>
<feature type="region of interest" description="Disordered" evidence="3">
    <location>
        <begin position="156"/>
        <end position="199"/>
    </location>
</feature>
<feature type="compositionally biased region" description="Polar residues" evidence="3">
    <location>
        <begin position="156"/>
        <end position="173"/>
    </location>
</feature>
<feature type="compositionally biased region" description="Basic and acidic residues" evidence="3">
    <location>
        <begin position="174"/>
        <end position="186"/>
    </location>
</feature>
<feature type="sequence conflict" description="In Ref. 1; BAA13914." evidence="5" ref="1">
    <original>N</original>
    <variation>D</variation>
    <location>
        <position position="80"/>
    </location>
</feature>
<feature type="sequence conflict" description="In Ref. 1; BAA13914." evidence="5" ref="1">
    <original>L</original>
    <variation>F</variation>
    <location>
        <position position="106"/>
    </location>
</feature>
<feature type="sequence conflict" description="In Ref. 1; BAA13914." evidence="5" ref="1">
    <original>S</original>
    <variation>Y</variation>
    <location>
        <position position="110"/>
    </location>
</feature>
<feature type="sequence conflict" description="In Ref. 1; BAA13914." evidence="5" ref="1">
    <original>Q</original>
    <variation>L</variation>
    <location>
        <position position="116"/>
    </location>
</feature>
<feature type="sequence conflict" description="In Ref. 1; BAA13914." evidence="5" ref="1">
    <original>N</original>
    <variation>D</variation>
    <location>
        <position position="126"/>
    </location>
</feature>
<feature type="sequence conflict" description="In Ref. 1; BAA13914." evidence="5" ref="1">
    <original>Q</original>
    <variation>P</variation>
    <location>
        <position position="136"/>
    </location>
</feature>
<feature type="sequence conflict" description="In Ref. 1; BAA13914." evidence="5" ref="1">
    <original>QD</original>
    <variation>LE</variation>
    <location>
        <begin position="165"/>
        <end position="166"/>
    </location>
</feature>
<feature type="sequence conflict" description="In Ref. 1; BAA13914." evidence="5" ref="1">
    <original>N</original>
    <variation>Y</variation>
    <location>
        <position position="180"/>
    </location>
</feature>
<feature type="sequence conflict" description="In Ref. 1; BAA13914." evidence="5" ref="1">
    <original>DDD</original>
    <variation>NNN</variation>
    <location>
        <begin position="187"/>
        <end position="189"/>
    </location>
</feature>
<feature type="sequence conflict" description="In Ref. 1; BAA13914." evidence="5" ref="1">
    <original>INE</original>
    <variation>FNK</variation>
    <location>
        <begin position="202"/>
        <end position="204"/>
    </location>
</feature>
<feature type="sequence conflict" description="In Ref. 1; BAA13914." evidence="5" ref="1">
    <original>F</original>
    <variation>L</variation>
    <location>
        <position position="214"/>
    </location>
</feature>
<feature type="sequence conflict" description="In Ref. 1; BAA13914." evidence="5" ref="1">
    <original>F</original>
    <variation>L</variation>
    <location>
        <position position="220"/>
    </location>
</feature>
<feature type="sequence conflict" description="In Ref. 1; BAA13914." evidence="5" ref="1">
    <original>C</original>
    <variation>G</variation>
    <location>
        <position position="228"/>
    </location>
</feature>
<feature type="sequence conflict" description="In Ref. 1; BAA13914." evidence="5" ref="1">
    <original>VY</original>
    <variation>FN</variation>
    <location>
        <begin position="235"/>
        <end position="236"/>
    </location>
</feature>
<feature type="sequence conflict" description="In Ref. 1; BAA13914." evidence="5" ref="1">
    <original>M</original>
    <variation>L</variation>
    <location>
        <position position="271"/>
    </location>
</feature>
<sequence length="327" mass="37665">MKGKFRFSLKRGLLRPSWNKYNIYNIARKQLPALNNRTLYQKKWNAKKETRSYHGPQLREYQLKNAFRPKLEGVISSLDNKLPIPFMNQTYAFLESRLDMSIHRALFASSALQARQLVLHGKVHVNGKPERRAYRQLLPGDLVTVDQKSVMNCVSASSNNTPSIQDGKQTEQVSSKDGENEKKKDNDDDLFEQTSNGKLPSINETISNFVPKPFMSLMAFIPAYLEVCFRTCSFVYVRDPVARPGLTEVPSPFPEDLHALAYTYYIRSRNMRQGAARCQARRLIPQKVRDASFYQGPPELYKKRNVSPKEAFSHRYPVRQGKLTKLV</sequence>
<dbReference type="EMBL" id="D89253">
    <property type="protein sequence ID" value="BAA13914.1"/>
    <property type="molecule type" value="mRNA"/>
</dbReference>
<dbReference type="EMBL" id="CU329671">
    <property type="protein sequence ID" value="CAA18654.1"/>
    <property type="molecule type" value="Genomic_DNA"/>
</dbReference>
<dbReference type="PIR" id="T39402">
    <property type="entry name" value="T39402"/>
</dbReference>
<dbReference type="PIR" id="T43177">
    <property type="entry name" value="T43177"/>
</dbReference>
<dbReference type="RefSeq" id="NP_596550.1">
    <property type="nucleotide sequence ID" value="NM_001022471.2"/>
</dbReference>
<dbReference type="SMR" id="O60063"/>
<dbReference type="BioGRID" id="276594">
    <property type="interactions" value="1"/>
</dbReference>
<dbReference type="ComplexPortal" id="CPX-10315">
    <property type="entry name" value="37S mitochondrial small ribosomal subunit"/>
</dbReference>
<dbReference type="FunCoup" id="O60063">
    <property type="interactions" value="54"/>
</dbReference>
<dbReference type="STRING" id="284812.O60063"/>
<dbReference type="iPTMnet" id="O60063"/>
<dbReference type="PaxDb" id="4896-SPBC13G1.01c.1"/>
<dbReference type="EnsemblFungi" id="SPBC13G1.01c.1">
    <property type="protein sequence ID" value="SPBC13G1.01c.1:pep"/>
    <property type="gene ID" value="SPBC13G1.01c"/>
</dbReference>
<dbReference type="GeneID" id="2540056"/>
<dbReference type="KEGG" id="spo:2540056"/>
<dbReference type="PomBase" id="SPBC13G1.01c">
    <property type="gene designation" value="nam9"/>
</dbReference>
<dbReference type="VEuPathDB" id="FungiDB:SPBC13G1.01c"/>
<dbReference type="eggNOG" id="ENOG502QTS9">
    <property type="taxonomic scope" value="Eukaryota"/>
</dbReference>
<dbReference type="HOGENOM" id="CLU_041823_0_0_1"/>
<dbReference type="InParanoid" id="O60063"/>
<dbReference type="OMA" id="LLRPSWN"/>
<dbReference type="PhylomeDB" id="O60063"/>
<dbReference type="PRO" id="PR:O60063"/>
<dbReference type="Proteomes" id="UP000002485">
    <property type="component" value="Chromosome II"/>
</dbReference>
<dbReference type="GO" id="GO:0005763">
    <property type="term" value="C:mitochondrial small ribosomal subunit"/>
    <property type="evidence" value="ECO:0000318"/>
    <property type="project" value="GO_Central"/>
</dbReference>
<dbReference type="GO" id="GO:0005739">
    <property type="term" value="C:mitochondrion"/>
    <property type="evidence" value="ECO:0007005"/>
    <property type="project" value="PomBase"/>
</dbReference>
<dbReference type="GO" id="GO:0019843">
    <property type="term" value="F:rRNA binding"/>
    <property type="evidence" value="ECO:0000318"/>
    <property type="project" value="GO_Central"/>
</dbReference>
<dbReference type="GO" id="GO:0003735">
    <property type="term" value="F:structural constituent of ribosome"/>
    <property type="evidence" value="ECO:0000318"/>
    <property type="project" value="GO_Central"/>
</dbReference>
<dbReference type="GO" id="GO:0032543">
    <property type="term" value="P:mitochondrial translation"/>
    <property type="evidence" value="ECO:0000250"/>
    <property type="project" value="PomBase"/>
</dbReference>
<dbReference type="GO" id="GO:0042274">
    <property type="term" value="P:ribosomal small subunit biogenesis"/>
    <property type="evidence" value="ECO:0000318"/>
    <property type="project" value="GO_Central"/>
</dbReference>
<dbReference type="CDD" id="cd00165">
    <property type="entry name" value="S4"/>
    <property type="match status" value="1"/>
</dbReference>
<dbReference type="Gene3D" id="1.10.1050.10">
    <property type="entry name" value="Ribosomal Protein S4 Delta 41, Chain A, domain 1"/>
    <property type="match status" value="1"/>
</dbReference>
<dbReference type="Gene3D" id="3.10.290.10">
    <property type="entry name" value="RNA-binding S4 domain"/>
    <property type="match status" value="1"/>
</dbReference>
<dbReference type="InterPro" id="IPR022801">
    <property type="entry name" value="Ribosomal_uS4"/>
</dbReference>
<dbReference type="InterPro" id="IPR018079">
    <property type="entry name" value="Ribosomal_uS4_CS"/>
</dbReference>
<dbReference type="InterPro" id="IPR002942">
    <property type="entry name" value="S4_RNA-bd"/>
</dbReference>
<dbReference type="InterPro" id="IPR036986">
    <property type="entry name" value="S4_RNA-bd_sf"/>
</dbReference>
<dbReference type="PANTHER" id="PTHR11831">
    <property type="entry name" value="30S 40S RIBOSOMAL PROTEIN"/>
    <property type="match status" value="1"/>
</dbReference>
<dbReference type="PANTHER" id="PTHR11831:SF4">
    <property type="entry name" value="SMALL RIBOSOMAL SUBUNIT PROTEIN US4M"/>
    <property type="match status" value="1"/>
</dbReference>
<dbReference type="Pfam" id="PF01479">
    <property type="entry name" value="S4"/>
    <property type="match status" value="1"/>
</dbReference>
<dbReference type="SMART" id="SM00363">
    <property type="entry name" value="S4"/>
    <property type="match status" value="1"/>
</dbReference>
<dbReference type="SUPFAM" id="SSF55174">
    <property type="entry name" value="Alpha-L RNA-binding motif"/>
    <property type="match status" value="1"/>
</dbReference>
<dbReference type="PROSITE" id="PS00632">
    <property type="entry name" value="RIBOSOMAL_S4"/>
    <property type="match status" value="1"/>
</dbReference>
<dbReference type="PROSITE" id="PS50889">
    <property type="entry name" value="S4"/>
    <property type="match status" value="1"/>
</dbReference>
<name>NAM9_SCHPO</name>